<proteinExistence type="inferred from homology"/>
<organism>
    <name type="scientific">Klebsiella pneumoniae subsp. pneumoniae (strain ATCC 700721 / MGH 78578)</name>
    <dbReference type="NCBI Taxonomy" id="272620"/>
    <lineage>
        <taxon>Bacteria</taxon>
        <taxon>Pseudomonadati</taxon>
        <taxon>Pseudomonadota</taxon>
        <taxon>Gammaproteobacteria</taxon>
        <taxon>Enterobacterales</taxon>
        <taxon>Enterobacteriaceae</taxon>
        <taxon>Klebsiella/Raoultella group</taxon>
        <taxon>Klebsiella</taxon>
        <taxon>Klebsiella pneumoniae complex</taxon>
    </lineage>
</organism>
<name>PROA_KLEP7</name>
<sequence>MLEQMGIAAKAASWQLALLSSREKNQVLEKIADYLEAQTDDILRANAEDLAEARANGLSEAMLDRLALTPARLSGIANDVRQVCNLADPVGQVIDGGLLDSGLRIERRRVPLGVIGVIYEARPNVTVDVASLCLKTGNAAILRGGKETWRTNAATVKVIQQALQECGLPAAAVQAIDSPDRALVGEMLKMDKYIDMLIPRGGAGLHKLCREQSTIPVITGGIGVCHIFVDETAEIPPALKIIVNAKTQRPSTCNTVETLLVHRNIADTFLPALSKQMAESGVTLHAAPSALPALQNGPAKVEPVKAEQYDDEYLSLDLNVKVVADMDEAIAHIREHGTQHSDAILTRTLRNANRFINEVDSSAVYVNASTRFTDGGQFGLGAEVAVSTQKLHARGPMGLEALTTYKWIGFGDDTIRA</sequence>
<dbReference type="EC" id="1.2.1.41" evidence="1"/>
<dbReference type="EMBL" id="CP000647">
    <property type="protein sequence ID" value="ABR75732.1"/>
    <property type="molecule type" value="Genomic_DNA"/>
</dbReference>
<dbReference type="RefSeq" id="WP_011977704.1">
    <property type="nucleotide sequence ID" value="NC_009648.1"/>
</dbReference>
<dbReference type="SMR" id="A6T561"/>
<dbReference type="STRING" id="272620.KPN_00280"/>
<dbReference type="PaxDb" id="272620-KPN_00280"/>
<dbReference type="EnsemblBacteria" id="ABR75732">
    <property type="protein sequence ID" value="ABR75732"/>
    <property type="gene ID" value="KPN_00280"/>
</dbReference>
<dbReference type="KEGG" id="kpn:KPN_00280"/>
<dbReference type="HOGENOM" id="CLU_030231_0_0_6"/>
<dbReference type="UniPathway" id="UPA00098">
    <property type="reaction ID" value="UER00360"/>
</dbReference>
<dbReference type="Proteomes" id="UP000000265">
    <property type="component" value="Chromosome"/>
</dbReference>
<dbReference type="GO" id="GO:0005737">
    <property type="term" value="C:cytoplasm"/>
    <property type="evidence" value="ECO:0007669"/>
    <property type="project" value="UniProtKB-SubCell"/>
</dbReference>
<dbReference type="GO" id="GO:0004350">
    <property type="term" value="F:glutamate-5-semialdehyde dehydrogenase activity"/>
    <property type="evidence" value="ECO:0007669"/>
    <property type="project" value="UniProtKB-UniRule"/>
</dbReference>
<dbReference type="GO" id="GO:0050661">
    <property type="term" value="F:NADP binding"/>
    <property type="evidence" value="ECO:0007669"/>
    <property type="project" value="InterPro"/>
</dbReference>
<dbReference type="GO" id="GO:0055129">
    <property type="term" value="P:L-proline biosynthetic process"/>
    <property type="evidence" value="ECO:0007669"/>
    <property type="project" value="UniProtKB-UniRule"/>
</dbReference>
<dbReference type="CDD" id="cd07079">
    <property type="entry name" value="ALDH_F18-19_ProA-GPR"/>
    <property type="match status" value="1"/>
</dbReference>
<dbReference type="FunFam" id="3.40.309.10:FF:000006">
    <property type="entry name" value="Gamma-glutamyl phosphate reductase"/>
    <property type="match status" value="1"/>
</dbReference>
<dbReference type="Gene3D" id="3.40.605.10">
    <property type="entry name" value="Aldehyde Dehydrogenase, Chain A, domain 1"/>
    <property type="match status" value="1"/>
</dbReference>
<dbReference type="Gene3D" id="3.40.309.10">
    <property type="entry name" value="Aldehyde Dehydrogenase, Chain A, domain 2"/>
    <property type="match status" value="1"/>
</dbReference>
<dbReference type="HAMAP" id="MF_00412">
    <property type="entry name" value="ProA"/>
    <property type="match status" value="1"/>
</dbReference>
<dbReference type="InterPro" id="IPR016161">
    <property type="entry name" value="Ald_DH/histidinol_DH"/>
</dbReference>
<dbReference type="InterPro" id="IPR016163">
    <property type="entry name" value="Ald_DH_C"/>
</dbReference>
<dbReference type="InterPro" id="IPR016162">
    <property type="entry name" value="Ald_DH_N"/>
</dbReference>
<dbReference type="InterPro" id="IPR015590">
    <property type="entry name" value="Aldehyde_DH_dom"/>
</dbReference>
<dbReference type="InterPro" id="IPR020593">
    <property type="entry name" value="G-glutamylP_reductase_CS"/>
</dbReference>
<dbReference type="InterPro" id="IPR012134">
    <property type="entry name" value="Glu-5-SA_DH"/>
</dbReference>
<dbReference type="InterPro" id="IPR000965">
    <property type="entry name" value="GPR_dom"/>
</dbReference>
<dbReference type="NCBIfam" id="NF001221">
    <property type="entry name" value="PRK00197.1"/>
    <property type="match status" value="1"/>
</dbReference>
<dbReference type="NCBIfam" id="TIGR00407">
    <property type="entry name" value="proA"/>
    <property type="match status" value="1"/>
</dbReference>
<dbReference type="PANTHER" id="PTHR11063:SF8">
    <property type="entry name" value="DELTA-1-PYRROLINE-5-CARBOXYLATE SYNTHASE"/>
    <property type="match status" value="1"/>
</dbReference>
<dbReference type="PANTHER" id="PTHR11063">
    <property type="entry name" value="GLUTAMATE SEMIALDEHYDE DEHYDROGENASE"/>
    <property type="match status" value="1"/>
</dbReference>
<dbReference type="Pfam" id="PF00171">
    <property type="entry name" value="Aldedh"/>
    <property type="match status" value="1"/>
</dbReference>
<dbReference type="PIRSF" id="PIRSF000151">
    <property type="entry name" value="GPR"/>
    <property type="match status" value="1"/>
</dbReference>
<dbReference type="SUPFAM" id="SSF53720">
    <property type="entry name" value="ALDH-like"/>
    <property type="match status" value="1"/>
</dbReference>
<dbReference type="PROSITE" id="PS01223">
    <property type="entry name" value="PROA"/>
    <property type="match status" value="1"/>
</dbReference>
<evidence type="ECO:0000255" key="1">
    <source>
        <dbReference type="HAMAP-Rule" id="MF_00412"/>
    </source>
</evidence>
<accession>A6T561</accession>
<keyword id="KW-0028">Amino-acid biosynthesis</keyword>
<keyword id="KW-0963">Cytoplasm</keyword>
<keyword id="KW-0521">NADP</keyword>
<keyword id="KW-0560">Oxidoreductase</keyword>
<keyword id="KW-0641">Proline biosynthesis</keyword>
<reference key="1">
    <citation type="submission" date="2006-09" db="EMBL/GenBank/DDBJ databases">
        <authorList>
            <consortium name="The Klebsiella pneumonia Genome Sequencing Project"/>
            <person name="McClelland M."/>
            <person name="Sanderson E.K."/>
            <person name="Spieth J."/>
            <person name="Clifton W.S."/>
            <person name="Latreille P."/>
            <person name="Sabo A."/>
            <person name="Pepin K."/>
            <person name="Bhonagiri V."/>
            <person name="Porwollik S."/>
            <person name="Ali J."/>
            <person name="Wilson R.K."/>
        </authorList>
    </citation>
    <scope>NUCLEOTIDE SEQUENCE [LARGE SCALE GENOMIC DNA]</scope>
    <source>
        <strain>ATCC 700721 / MGH 78578</strain>
    </source>
</reference>
<feature type="chain" id="PRO_1000049956" description="Gamma-glutamyl phosphate reductase">
    <location>
        <begin position="1"/>
        <end position="417"/>
    </location>
</feature>
<protein>
    <recommendedName>
        <fullName evidence="1">Gamma-glutamyl phosphate reductase</fullName>
        <shortName evidence="1">GPR</shortName>
        <ecNumber evidence="1">1.2.1.41</ecNumber>
    </recommendedName>
    <alternativeName>
        <fullName evidence="1">Glutamate-5-semialdehyde dehydrogenase</fullName>
    </alternativeName>
    <alternativeName>
        <fullName evidence="1">Glutamyl-gamma-semialdehyde dehydrogenase</fullName>
        <shortName evidence="1">GSA dehydrogenase</shortName>
    </alternativeName>
</protein>
<comment type="function">
    <text evidence="1">Catalyzes the NADPH-dependent reduction of L-glutamate 5-phosphate into L-glutamate 5-semialdehyde and phosphate. The product spontaneously undergoes cyclization to form 1-pyrroline-5-carboxylate.</text>
</comment>
<comment type="catalytic activity">
    <reaction evidence="1">
        <text>L-glutamate 5-semialdehyde + phosphate + NADP(+) = L-glutamyl 5-phosphate + NADPH + H(+)</text>
        <dbReference type="Rhea" id="RHEA:19541"/>
        <dbReference type="ChEBI" id="CHEBI:15378"/>
        <dbReference type="ChEBI" id="CHEBI:43474"/>
        <dbReference type="ChEBI" id="CHEBI:57783"/>
        <dbReference type="ChEBI" id="CHEBI:58066"/>
        <dbReference type="ChEBI" id="CHEBI:58274"/>
        <dbReference type="ChEBI" id="CHEBI:58349"/>
        <dbReference type="EC" id="1.2.1.41"/>
    </reaction>
</comment>
<comment type="pathway">
    <text evidence="1">Amino-acid biosynthesis; L-proline biosynthesis; L-glutamate 5-semialdehyde from L-glutamate: step 2/2.</text>
</comment>
<comment type="subcellular location">
    <subcellularLocation>
        <location evidence="1">Cytoplasm</location>
    </subcellularLocation>
</comment>
<comment type="similarity">
    <text evidence="1">Belongs to the gamma-glutamyl phosphate reductase family.</text>
</comment>
<gene>
    <name evidence="1" type="primary">proA</name>
    <name type="ordered locus">KPN78578_02710</name>
    <name type="ORF">KPN_00280</name>
</gene>